<keyword id="KW-0012">Acyltransferase</keyword>
<keyword id="KW-0441">Lipid A biosynthesis</keyword>
<keyword id="KW-0444">Lipid biosynthesis</keyword>
<keyword id="KW-0443">Lipid metabolism</keyword>
<keyword id="KW-1185">Reference proteome</keyword>
<keyword id="KW-0677">Repeat</keyword>
<keyword id="KW-0808">Transferase</keyword>
<sequence length="344" mass="36194">MEFSQLVERLQTHIQCHSLEKFGDRNPTLGGVAALTEALTGQISYVDSAKYAPQMKTTQASALILPPDAKLQAEADAQGIAWCATAQPRLLFAAAIAVFYQPYRPPAGIHATAVIDPSVHCGEDVSIGPHVVIYPNVTLGDRVCIHGNVVIYPGVTIGNDSVLHGNCTIHERTQIGQGCVIHSGAAIGAEGFGFVPTPEGWFKMEQSGQVVLEDGVEIGCNSAVDRPAVGETRIGKNTKLDNMVHVAHGCRIGEACALAGQVGLAGGVTIGNRVILAGQVGVADKSEIGDGAIASAQTGIHGKVGPKEVVCGSPHMPHKLYLKASAIYKRLPEMYDTLKKLKKV</sequence>
<evidence type="ECO:0000255" key="1">
    <source>
        <dbReference type="HAMAP-Rule" id="MF_00523"/>
    </source>
</evidence>
<protein>
    <recommendedName>
        <fullName evidence="1">UDP-3-O-acylglucosamine N-acyltransferase</fullName>
        <ecNumber evidence="1">2.3.1.191</ecNumber>
    </recommendedName>
</protein>
<accession>Q55612</accession>
<comment type="function">
    <text evidence="1">Catalyzes the N-acylation of UDP-3-O-acylglucosamine using 3-hydroxyacyl-ACP as the acyl donor. Is involved in the biosynthesis of lipid A, a phosphorylated glycolipid that anchors the lipopolysaccharide to the outer membrane of the cell.</text>
</comment>
<comment type="catalytic activity">
    <reaction evidence="1">
        <text>a UDP-3-O-[(3R)-3-hydroxyacyl]-alpha-D-glucosamine + a (3R)-hydroxyacyl-[ACP] = a UDP-2-N,3-O-bis[(3R)-3-hydroxyacyl]-alpha-D-glucosamine + holo-[ACP] + H(+)</text>
        <dbReference type="Rhea" id="RHEA:53836"/>
        <dbReference type="Rhea" id="RHEA-COMP:9685"/>
        <dbReference type="Rhea" id="RHEA-COMP:9945"/>
        <dbReference type="ChEBI" id="CHEBI:15378"/>
        <dbReference type="ChEBI" id="CHEBI:64479"/>
        <dbReference type="ChEBI" id="CHEBI:78827"/>
        <dbReference type="ChEBI" id="CHEBI:137740"/>
        <dbReference type="ChEBI" id="CHEBI:137748"/>
        <dbReference type="EC" id="2.3.1.191"/>
    </reaction>
</comment>
<comment type="pathway">
    <text evidence="1">Bacterial outer membrane biogenesis; LPS lipid A biosynthesis.</text>
</comment>
<comment type="subunit">
    <text evidence="1">Homotrimer.</text>
</comment>
<comment type="similarity">
    <text evidence="1">Belongs to the transferase hexapeptide repeat family. LpxD subfamily.</text>
</comment>
<name>LPXD_SYNY3</name>
<gene>
    <name evidence="1" type="primary">lpxD</name>
    <name type="ordered locus">slr0776</name>
</gene>
<proteinExistence type="inferred from homology"/>
<organism>
    <name type="scientific">Synechocystis sp. (strain ATCC 27184 / PCC 6803 / Kazusa)</name>
    <dbReference type="NCBI Taxonomy" id="1111708"/>
    <lineage>
        <taxon>Bacteria</taxon>
        <taxon>Bacillati</taxon>
        <taxon>Cyanobacteriota</taxon>
        <taxon>Cyanophyceae</taxon>
        <taxon>Synechococcales</taxon>
        <taxon>Merismopediaceae</taxon>
        <taxon>Synechocystis</taxon>
    </lineage>
</organism>
<feature type="chain" id="PRO_0000059706" description="UDP-3-O-acylglucosamine N-acyltransferase">
    <location>
        <begin position="1"/>
        <end position="344"/>
    </location>
</feature>
<feature type="active site" description="Proton acceptor" evidence="1">
    <location>
        <position position="248"/>
    </location>
</feature>
<dbReference type="EC" id="2.3.1.191" evidence="1"/>
<dbReference type="EMBL" id="BA000022">
    <property type="protein sequence ID" value="BAA10120.1"/>
    <property type="molecule type" value="Genomic_DNA"/>
</dbReference>
<dbReference type="PIR" id="S76268">
    <property type="entry name" value="S76268"/>
</dbReference>
<dbReference type="SMR" id="Q55612"/>
<dbReference type="STRING" id="1148.gene:10499612"/>
<dbReference type="PaxDb" id="1148-1001495"/>
<dbReference type="EnsemblBacteria" id="BAA10120">
    <property type="protein sequence ID" value="BAA10120"/>
    <property type="gene ID" value="BAA10120"/>
</dbReference>
<dbReference type="KEGG" id="syn:slr0776"/>
<dbReference type="eggNOG" id="COG1044">
    <property type="taxonomic scope" value="Bacteria"/>
</dbReference>
<dbReference type="InParanoid" id="Q55612"/>
<dbReference type="PhylomeDB" id="Q55612"/>
<dbReference type="UniPathway" id="UPA00973"/>
<dbReference type="Proteomes" id="UP000001425">
    <property type="component" value="Chromosome"/>
</dbReference>
<dbReference type="GO" id="GO:0031470">
    <property type="term" value="C:carboxysome"/>
    <property type="evidence" value="ECO:0007669"/>
    <property type="project" value="UniProtKB-ARBA"/>
</dbReference>
<dbReference type="GO" id="GO:0016020">
    <property type="term" value="C:membrane"/>
    <property type="evidence" value="ECO:0007669"/>
    <property type="project" value="GOC"/>
</dbReference>
<dbReference type="GO" id="GO:0016410">
    <property type="term" value="F:N-acyltransferase activity"/>
    <property type="evidence" value="ECO:0007669"/>
    <property type="project" value="InterPro"/>
</dbReference>
<dbReference type="GO" id="GO:0043886">
    <property type="term" value="F:structural constituent of carboxysome shell"/>
    <property type="evidence" value="ECO:0007669"/>
    <property type="project" value="UniProtKB-ARBA"/>
</dbReference>
<dbReference type="GO" id="GO:0009245">
    <property type="term" value="P:lipid A biosynthetic process"/>
    <property type="evidence" value="ECO:0007669"/>
    <property type="project" value="UniProtKB-UniRule"/>
</dbReference>
<dbReference type="CDD" id="cd03352">
    <property type="entry name" value="LbH_LpxD"/>
    <property type="match status" value="1"/>
</dbReference>
<dbReference type="Gene3D" id="2.160.10.10">
    <property type="entry name" value="Hexapeptide repeat proteins"/>
    <property type="match status" value="1"/>
</dbReference>
<dbReference type="Gene3D" id="3.40.1390.10">
    <property type="entry name" value="MurE/MurF, N-terminal domain"/>
    <property type="match status" value="1"/>
</dbReference>
<dbReference type="HAMAP" id="MF_00523">
    <property type="entry name" value="LpxD"/>
    <property type="match status" value="1"/>
</dbReference>
<dbReference type="InterPro" id="IPR001451">
    <property type="entry name" value="Hexapep"/>
</dbReference>
<dbReference type="InterPro" id="IPR007691">
    <property type="entry name" value="LpxD"/>
</dbReference>
<dbReference type="InterPro" id="IPR011004">
    <property type="entry name" value="Trimer_LpxA-like_sf"/>
</dbReference>
<dbReference type="InterPro" id="IPR020573">
    <property type="entry name" value="UDP_GlcNAc_AcTrfase_non-rep"/>
</dbReference>
<dbReference type="NCBIfam" id="TIGR01853">
    <property type="entry name" value="lipid_A_lpxD"/>
    <property type="match status" value="1"/>
</dbReference>
<dbReference type="NCBIfam" id="NF002060">
    <property type="entry name" value="PRK00892.1"/>
    <property type="match status" value="1"/>
</dbReference>
<dbReference type="PANTHER" id="PTHR43378">
    <property type="entry name" value="UDP-3-O-ACYLGLUCOSAMINE N-ACYLTRANSFERASE"/>
    <property type="match status" value="1"/>
</dbReference>
<dbReference type="PANTHER" id="PTHR43378:SF2">
    <property type="entry name" value="UDP-3-O-ACYLGLUCOSAMINE N-ACYLTRANSFERASE 1, MITOCHONDRIAL-RELATED"/>
    <property type="match status" value="1"/>
</dbReference>
<dbReference type="Pfam" id="PF00132">
    <property type="entry name" value="Hexapep"/>
    <property type="match status" value="2"/>
</dbReference>
<dbReference type="Pfam" id="PF04613">
    <property type="entry name" value="LpxD"/>
    <property type="match status" value="1"/>
</dbReference>
<dbReference type="SUPFAM" id="SSF51161">
    <property type="entry name" value="Trimeric LpxA-like enzymes"/>
    <property type="match status" value="1"/>
</dbReference>
<reference key="1">
    <citation type="journal article" date="1995" name="DNA Res.">
        <title>Sequence analysis of the genome of the unicellular cyanobacterium Synechocystis sp. strain PCC6803. I. Sequence features in the 1 Mb region from map positions 64% to 92% of the genome.</title>
        <authorList>
            <person name="Kaneko T."/>
            <person name="Tanaka A."/>
            <person name="Sato S."/>
            <person name="Kotani H."/>
            <person name="Sazuka T."/>
            <person name="Miyajima N."/>
            <person name="Sugiura M."/>
            <person name="Tabata S."/>
        </authorList>
    </citation>
    <scope>NUCLEOTIDE SEQUENCE [LARGE SCALE GENOMIC DNA]</scope>
    <source>
        <strain>ATCC 27184 / PCC 6803 / N-1</strain>
    </source>
</reference>
<reference key="2">
    <citation type="journal article" date="1996" name="DNA Res.">
        <title>Sequence analysis of the genome of the unicellular cyanobacterium Synechocystis sp. strain PCC6803. II. Sequence determination of the entire genome and assignment of potential protein-coding regions.</title>
        <authorList>
            <person name="Kaneko T."/>
            <person name="Sato S."/>
            <person name="Kotani H."/>
            <person name="Tanaka A."/>
            <person name="Asamizu E."/>
            <person name="Nakamura Y."/>
            <person name="Miyajima N."/>
            <person name="Hirosawa M."/>
            <person name="Sugiura M."/>
            <person name="Sasamoto S."/>
            <person name="Kimura T."/>
            <person name="Hosouchi T."/>
            <person name="Matsuno A."/>
            <person name="Muraki A."/>
            <person name="Nakazaki N."/>
            <person name="Naruo K."/>
            <person name="Okumura S."/>
            <person name="Shimpo S."/>
            <person name="Takeuchi C."/>
            <person name="Wada T."/>
            <person name="Watanabe A."/>
            <person name="Yamada M."/>
            <person name="Yasuda M."/>
            <person name="Tabata S."/>
        </authorList>
    </citation>
    <scope>NUCLEOTIDE SEQUENCE [LARGE SCALE GENOMIC DNA]</scope>
    <source>
        <strain>ATCC 27184 / PCC 6803 / Kazusa</strain>
    </source>
</reference>